<organism>
    <name type="scientific">Dictyostelium discoideum</name>
    <name type="common">Social amoeba</name>
    <dbReference type="NCBI Taxonomy" id="44689"/>
    <lineage>
        <taxon>Eukaryota</taxon>
        <taxon>Amoebozoa</taxon>
        <taxon>Evosea</taxon>
        <taxon>Eumycetozoa</taxon>
        <taxon>Dictyostelia</taxon>
        <taxon>Dictyosteliales</taxon>
        <taxon>Dictyosteliaceae</taxon>
        <taxon>Dictyostelium</taxon>
    </lineage>
</organism>
<gene>
    <name type="primary">rasW</name>
    <name type="ORF">DDB_G0270122</name>
</gene>
<name>RASW_DICDI</name>
<accession>Q55CC0</accession>
<keyword id="KW-1003">Cell membrane</keyword>
<keyword id="KW-0342">GTP-binding</keyword>
<keyword id="KW-0378">Hydrolase</keyword>
<keyword id="KW-0449">Lipoprotein</keyword>
<keyword id="KW-0472">Membrane</keyword>
<keyword id="KW-0488">Methylation</keyword>
<keyword id="KW-0547">Nucleotide-binding</keyword>
<keyword id="KW-0636">Prenylation</keyword>
<keyword id="KW-1185">Reference proteome</keyword>
<feature type="chain" id="PRO_0000365565" description="Ras-like protein rasW">
    <location>
        <begin position="1"/>
        <end position="213"/>
    </location>
</feature>
<feature type="propeptide" id="PRO_0000365566" description="Removed in mature form" evidence="1">
    <location>
        <begin position="214"/>
        <end position="216"/>
    </location>
</feature>
<feature type="region of interest" description="Disordered" evidence="3">
    <location>
        <begin position="171"/>
        <end position="193"/>
    </location>
</feature>
<feature type="short sequence motif" description="Effector region">
    <location>
        <begin position="38"/>
        <end position="46"/>
    </location>
</feature>
<feature type="compositionally biased region" description="Basic and acidic residues" evidence="3">
    <location>
        <begin position="172"/>
        <end position="189"/>
    </location>
</feature>
<feature type="binding site" evidence="1">
    <location>
        <begin position="16"/>
        <end position="23"/>
    </location>
    <ligand>
        <name>GTP</name>
        <dbReference type="ChEBI" id="CHEBI:37565"/>
    </ligand>
</feature>
<feature type="binding site" evidence="1">
    <location>
        <begin position="63"/>
        <end position="67"/>
    </location>
    <ligand>
        <name>GTP</name>
        <dbReference type="ChEBI" id="CHEBI:37565"/>
    </ligand>
</feature>
<feature type="binding site" evidence="1">
    <location>
        <begin position="122"/>
        <end position="125"/>
    </location>
    <ligand>
        <name>GTP</name>
        <dbReference type="ChEBI" id="CHEBI:37565"/>
    </ligand>
</feature>
<feature type="modified residue" description="Cysteine methyl ester" evidence="1">
    <location>
        <position position="213"/>
    </location>
</feature>
<feature type="lipid moiety-binding region" description="S-geranylgeranyl cysteine" evidence="1">
    <location>
        <position position="213"/>
    </location>
</feature>
<evidence type="ECO:0000250" key="1"/>
<evidence type="ECO:0000250" key="2">
    <source>
        <dbReference type="UniProtKB" id="P32253"/>
    </source>
</evidence>
<evidence type="ECO:0000256" key="3">
    <source>
        <dbReference type="SAM" id="MobiDB-lite"/>
    </source>
</evidence>
<evidence type="ECO:0000305" key="4"/>
<reference key="1">
    <citation type="journal article" date="2005" name="Nature">
        <title>The genome of the social amoeba Dictyostelium discoideum.</title>
        <authorList>
            <person name="Eichinger L."/>
            <person name="Pachebat J.A."/>
            <person name="Gloeckner G."/>
            <person name="Rajandream M.A."/>
            <person name="Sucgang R."/>
            <person name="Berriman M."/>
            <person name="Song J."/>
            <person name="Olsen R."/>
            <person name="Szafranski K."/>
            <person name="Xu Q."/>
            <person name="Tunggal B."/>
            <person name="Kummerfeld S."/>
            <person name="Madera M."/>
            <person name="Konfortov B.A."/>
            <person name="Rivero F."/>
            <person name="Bankier A.T."/>
            <person name="Lehmann R."/>
            <person name="Hamlin N."/>
            <person name="Davies R."/>
            <person name="Gaudet P."/>
            <person name="Fey P."/>
            <person name="Pilcher K."/>
            <person name="Chen G."/>
            <person name="Saunders D."/>
            <person name="Sodergren E.J."/>
            <person name="Davis P."/>
            <person name="Kerhornou A."/>
            <person name="Nie X."/>
            <person name="Hall N."/>
            <person name="Anjard C."/>
            <person name="Hemphill L."/>
            <person name="Bason N."/>
            <person name="Farbrother P."/>
            <person name="Desany B."/>
            <person name="Just E."/>
            <person name="Morio T."/>
            <person name="Rost R."/>
            <person name="Churcher C.M."/>
            <person name="Cooper J."/>
            <person name="Haydock S."/>
            <person name="van Driessche N."/>
            <person name="Cronin A."/>
            <person name="Goodhead I."/>
            <person name="Muzny D.M."/>
            <person name="Mourier T."/>
            <person name="Pain A."/>
            <person name="Lu M."/>
            <person name="Harper D."/>
            <person name="Lindsay R."/>
            <person name="Hauser H."/>
            <person name="James K.D."/>
            <person name="Quiles M."/>
            <person name="Madan Babu M."/>
            <person name="Saito T."/>
            <person name="Buchrieser C."/>
            <person name="Wardroper A."/>
            <person name="Felder M."/>
            <person name="Thangavelu M."/>
            <person name="Johnson D."/>
            <person name="Knights A."/>
            <person name="Loulseged H."/>
            <person name="Mungall K.L."/>
            <person name="Oliver K."/>
            <person name="Price C."/>
            <person name="Quail M.A."/>
            <person name="Urushihara H."/>
            <person name="Hernandez J."/>
            <person name="Rabbinowitsch E."/>
            <person name="Steffen D."/>
            <person name="Sanders M."/>
            <person name="Ma J."/>
            <person name="Kohara Y."/>
            <person name="Sharp S."/>
            <person name="Simmonds M.N."/>
            <person name="Spiegler S."/>
            <person name="Tivey A."/>
            <person name="Sugano S."/>
            <person name="White B."/>
            <person name="Walker D."/>
            <person name="Woodward J.R."/>
            <person name="Winckler T."/>
            <person name="Tanaka Y."/>
            <person name="Shaulsky G."/>
            <person name="Schleicher M."/>
            <person name="Weinstock G.M."/>
            <person name="Rosenthal A."/>
            <person name="Cox E.C."/>
            <person name="Chisholm R.L."/>
            <person name="Gibbs R.A."/>
            <person name="Loomis W.F."/>
            <person name="Platzer M."/>
            <person name="Kay R.R."/>
            <person name="Williams J.G."/>
            <person name="Dear P.H."/>
            <person name="Noegel A.A."/>
            <person name="Barrell B.G."/>
            <person name="Kuspa A."/>
        </authorList>
    </citation>
    <scope>NUCLEOTIDE SEQUENCE [LARGE SCALE GENOMIC DNA]</scope>
    <source>
        <strain>AX4</strain>
    </source>
</reference>
<comment type="function">
    <text evidence="2">Ras proteins bind GDP/GTP and possess intrinsic GTPase activity.</text>
</comment>
<comment type="catalytic activity">
    <reaction evidence="2">
        <text>GTP + H2O = GDP + phosphate + H(+)</text>
        <dbReference type="Rhea" id="RHEA:19669"/>
        <dbReference type="ChEBI" id="CHEBI:15377"/>
        <dbReference type="ChEBI" id="CHEBI:15378"/>
        <dbReference type="ChEBI" id="CHEBI:37565"/>
        <dbReference type="ChEBI" id="CHEBI:43474"/>
        <dbReference type="ChEBI" id="CHEBI:58189"/>
        <dbReference type="EC" id="3.6.5.2"/>
    </reaction>
</comment>
<comment type="subcellular location">
    <subcellularLocation>
        <location evidence="4">Cell membrane</location>
        <topology evidence="4">Lipid-anchor</topology>
        <orientation evidence="4">Cytoplasmic side</orientation>
    </subcellularLocation>
</comment>
<comment type="similarity">
    <text evidence="4">Belongs to the small GTPase superfamily. Ras family.</text>
</comment>
<sequence length="216" mass="24871">MTSYKNNNVISLCIMGDGGVGKTAVTIQFISNHFVYYYDPTIEDSYRKQCLVDDQVYMLDILDTAGQDELTAMRDQWIRSCEGFILVYSVTSRSSFDQIQFFREQIIRVLDSDDVPIMMIGNKIDLDDERQVTFQEGKDLARCLGMSFMEVSAKNRTNVEEVFNETVRIVKRKEDPQSHKPSKDSDSKKPLVNTSKIIKKINTRVKQTKTSICKMM</sequence>
<protein>
    <recommendedName>
        <fullName>Ras-like protein rasW</fullName>
        <ecNumber evidence="2">3.6.5.2</ecNumber>
    </recommendedName>
</protein>
<dbReference type="EC" id="3.6.5.2" evidence="2"/>
<dbReference type="EMBL" id="AAFI02000005">
    <property type="protein sequence ID" value="EAL72411.1"/>
    <property type="molecule type" value="Genomic_DNA"/>
</dbReference>
<dbReference type="RefSeq" id="XP_646561.1">
    <property type="nucleotide sequence ID" value="XM_641469.1"/>
</dbReference>
<dbReference type="SMR" id="Q55CC0"/>
<dbReference type="FunCoup" id="Q55CC0">
    <property type="interactions" value="3"/>
</dbReference>
<dbReference type="STRING" id="44689.Q55CC0"/>
<dbReference type="PaxDb" id="44689-DDB0229439"/>
<dbReference type="EnsemblProtists" id="EAL72411">
    <property type="protein sequence ID" value="EAL72411"/>
    <property type="gene ID" value="DDB_G0270122"/>
</dbReference>
<dbReference type="GeneID" id="8617529"/>
<dbReference type="KEGG" id="ddi:DDB_G0270122"/>
<dbReference type="dictyBase" id="DDB_G0270122">
    <property type="gene designation" value="rasW"/>
</dbReference>
<dbReference type="VEuPathDB" id="AmoebaDB:DDB_G0270122"/>
<dbReference type="eggNOG" id="KOG0395">
    <property type="taxonomic scope" value="Eukaryota"/>
</dbReference>
<dbReference type="HOGENOM" id="CLU_041217_9_8_1"/>
<dbReference type="InParanoid" id="Q55CC0"/>
<dbReference type="OMA" id="VRIKQDI"/>
<dbReference type="PhylomeDB" id="Q55CC0"/>
<dbReference type="PRO" id="PR:Q55CC0"/>
<dbReference type="Proteomes" id="UP000002195">
    <property type="component" value="Chromosome 1"/>
</dbReference>
<dbReference type="GO" id="GO:0005886">
    <property type="term" value="C:plasma membrane"/>
    <property type="evidence" value="ECO:0000318"/>
    <property type="project" value="GO_Central"/>
</dbReference>
<dbReference type="GO" id="GO:0003925">
    <property type="term" value="F:G protein activity"/>
    <property type="evidence" value="ECO:0007669"/>
    <property type="project" value="UniProtKB-EC"/>
</dbReference>
<dbReference type="GO" id="GO:0019003">
    <property type="term" value="F:GDP binding"/>
    <property type="evidence" value="ECO:0000318"/>
    <property type="project" value="GO_Central"/>
</dbReference>
<dbReference type="GO" id="GO:0005525">
    <property type="term" value="F:GTP binding"/>
    <property type="evidence" value="ECO:0000318"/>
    <property type="project" value="GO_Central"/>
</dbReference>
<dbReference type="GO" id="GO:0003924">
    <property type="term" value="F:GTPase activity"/>
    <property type="evidence" value="ECO:0000318"/>
    <property type="project" value="GO_Central"/>
</dbReference>
<dbReference type="GO" id="GO:0044351">
    <property type="term" value="P:macropinocytosis"/>
    <property type="evidence" value="ECO:0000316"/>
    <property type="project" value="dictyBase"/>
</dbReference>
<dbReference type="GO" id="GO:0007165">
    <property type="term" value="P:signal transduction"/>
    <property type="evidence" value="ECO:0007669"/>
    <property type="project" value="InterPro"/>
</dbReference>
<dbReference type="CDD" id="cd00876">
    <property type="entry name" value="Ras"/>
    <property type="match status" value="1"/>
</dbReference>
<dbReference type="FunFam" id="3.40.50.300:FF:000080">
    <property type="entry name" value="Ras-like GTPase Ras1"/>
    <property type="match status" value="1"/>
</dbReference>
<dbReference type="Gene3D" id="3.40.50.300">
    <property type="entry name" value="P-loop containing nucleotide triphosphate hydrolases"/>
    <property type="match status" value="1"/>
</dbReference>
<dbReference type="InterPro" id="IPR027417">
    <property type="entry name" value="P-loop_NTPase"/>
</dbReference>
<dbReference type="InterPro" id="IPR005225">
    <property type="entry name" value="Small_GTP-bd"/>
</dbReference>
<dbReference type="InterPro" id="IPR001806">
    <property type="entry name" value="Small_GTPase"/>
</dbReference>
<dbReference type="InterPro" id="IPR020849">
    <property type="entry name" value="Small_GTPase_Ras-type"/>
</dbReference>
<dbReference type="NCBIfam" id="TIGR00231">
    <property type="entry name" value="small_GTP"/>
    <property type="match status" value="1"/>
</dbReference>
<dbReference type="PANTHER" id="PTHR24070">
    <property type="entry name" value="RAS, DI-RAS, AND RHEB FAMILY MEMBERS OF SMALL GTPASE SUPERFAMILY"/>
    <property type="match status" value="1"/>
</dbReference>
<dbReference type="Pfam" id="PF00071">
    <property type="entry name" value="Ras"/>
    <property type="match status" value="1"/>
</dbReference>
<dbReference type="PRINTS" id="PR00449">
    <property type="entry name" value="RASTRNSFRMNG"/>
</dbReference>
<dbReference type="SMART" id="SM00175">
    <property type="entry name" value="RAB"/>
    <property type="match status" value="1"/>
</dbReference>
<dbReference type="SMART" id="SM00176">
    <property type="entry name" value="RAN"/>
    <property type="match status" value="1"/>
</dbReference>
<dbReference type="SMART" id="SM00173">
    <property type="entry name" value="RAS"/>
    <property type="match status" value="1"/>
</dbReference>
<dbReference type="SMART" id="SM00174">
    <property type="entry name" value="RHO"/>
    <property type="match status" value="1"/>
</dbReference>
<dbReference type="SUPFAM" id="SSF52540">
    <property type="entry name" value="P-loop containing nucleoside triphosphate hydrolases"/>
    <property type="match status" value="1"/>
</dbReference>
<dbReference type="PROSITE" id="PS51421">
    <property type="entry name" value="RAS"/>
    <property type="match status" value="1"/>
</dbReference>
<proteinExistence type="inferred from homology"/>